<accession>P0C7I2</accession>
<dbReference type="EMBL" id="AF173827">
    <property type="protein sequence ID" value="AAG16763.1"/>
    <property type="molecule type" value="mRNA"/>
</dbReference>
<dbReference type="RefSeq" id="NP_991340.1">
    <property type="nucleotide sequence ID" value="NM_205771.2"/>
</dbReference>
<dbReference type="FunCoup" id="P0C7I2">
    <property type="interactions" value="24"/>
</dbReference>
<dbReference type="STRING" id="9913.ENSBTAP00000035241"/>
<dbReference type="PaxDb" id="9913-ENSBTAP00000035241"/>
<dbReference type="GeneID" id="404059"/>
<dbReference type="KEGG" id="bta:404059"/>
<dbReference type="CTD" id="492311"/>
<dbReference type="VEuPathDB" id="HostDB:ENSBTAG00000025226"/>
<dbReference type="eggNOG" id="ENOG502TDWN">
    <property type="taxonomic scope" value="Eukaryota"/>
</dbReference>
<dbReference type="HOGENOM" id="CLU_3068056_0_0_1"/>
<dbReference type="InParanoid" id="P0C7I2"/>
<dbReference type="OrthoDB" id="9818125at2759"/>
<dbReference type="TreeFam" id="TF341188"/>
<dbReference type="Proteomes" id="UP000009136">
    <property type="component" value="Chromosome 7"/>
</dbReference>
<dbReference type="Bgee" id="ENSBTAG00000025226">
    <property type="expression patterns" value="Expressed in pons and 98 other cell types or tissues"/>
</dbReference>
<dbReference type="GO" id="GO:0005576">
    <property type="term" value="C:extracellular region"/>
    <property type="evidence" value="ECO:0007669"/>
    <property type="project" value="UniProtKB-SubCell"/>
</dbReference>
<dbReference type="InterPro" id="IPR038815">
    <property type="entry name" value="IGIP"/>
</dbReference>
<dbReference type="PANTHER" id="PTHR39224">
    <property type="entry name" value="IGA-INDUCING PROTEIN HOMOLOG"/>
    <property type="match status" value="1"/>
</dbReference>
<dbReference type="PANTHER" id="PTHR39224:SF1">
    <property type="entry name" value="IGA-INDUCING PROTEIN HOMOLOG"/>
    <property type="match status" value="1"/>
</dbReference>
<protein>
    <recommendedName>
        <fullName>IgA-inducing protein</fullName>
    </recommendedName>
</protein>
<proteinExistence type="evidence at protein level"/>
<comment type="function">
    <text>Enhances IgA secretion from B-cells stimulated via CD40.</text>
</comment>
<comment type="subcellular location">
    <subcellularLocation>
        <location evidence="2">Secreted</location>
    </subcellularLocation>
</comment>
<comment type="tissue specificity">
    <text evidence="2">Expressed in Peyer patches, spleen, thymus, liver and mesenteric lymph node. Expressed at high levels by dendritic cells, and at lower levels by T-cells, monocytes and B-cells.</text>
</comment>
<comment type="induction">
    <text evidence="2">By CD40 stimulation in dendritic cells (at protein level).</text>
</comment>
<name>IGIP_BOVIN</name>
<organism>
    <name type="scientific">Bos taurus</name>
    <name type="common">Bovine</name>
    <dbReference type="NCBI Taxonomy" id="9913"/>
    <lineage>
        <taxon>Eukaryota</taxon>
        <taxon>Metazoa</taxon>
        <taxon>Chordata</taxon>
        <taxon>Craniata</taxon>
        <taxon>Vertebrata</taxon>
        <taxon>Euteleostomi</taxon>
        <taxon>Mammalia</taxon>
        <taxon>Eutheria</taxon>
        <taxon>Laurasiatheria</taxon>
        <taxon>Artiodactyla</taxon>
        <taxon>Ruminantia</taxon>
        <taxon>Pecora</taxon>
        <taxon>Bovidae</taxon>
        <taxon>Bovinae</taxon>
        <taxon>Bos</taxon>
    </lineage>
</organism>
<evidence type="ECO:0000255" key="1"/>
<evidence type="ECO:0000269" key="2">
    <source>
    </source>
</evidence>
<feature type="signal peptide" evidence="1">
    <location>
        <begin position="1"/>
        <end position="24"/>
    </location>
</feature>
<feature type="chain" id="PRO_0000332152" description="IgA-inducing protein">
    <location>
        <begin position="25"/>
        <end position="47"/>
    </location>
</feature>
<sequence>MKKRSVSGCNITILAVVFSHLSAGNSPCGNQANVLCISRLEFVQYQS</sequence>
<keyword id="KW-1185">Reference proteome</keyword>
<keyword id="KW-0964">Secreted</keyword>
<keyword id="KW-0732">Signal</keyword>
<reference key="1">
    <citation type="journal article" date="2003" name="J. Immunol.">
        <title>Identification and characterization of a novel regulatory factor: IgA-inducing protein.</title>
        <authorList>
            <person name="Austin A.S."/>
            <person name="Haas K.M."/>
            <person name="Naugler S.M."/>
            <person name="Bajer A.A."/>
            <person name="Garcia-Tapia D."/>
            <person name="Estes D.M."/>
        </authorList>
    </citation>
    <scope>NUCLEOTIDE SEQUENCE [MRNA]</scope>
    <scope>TISSUE SPECIFICITY</scope>
    <scope>INDUCTION</scope>
    <scope>SUBCELLULAR LOCATION</scope>
</reference>
<gene>
    <name type="primary">IGIP</name>
</gene>